<feature type="chain" id="PRO_0000104608" description="Large ribosomal subunit protein uL30">
    <location>
        <begin position="1"/>
        <end position="59"/>
    </location>
</feature>
<dbReference type="EMBL" id="BX571856">
    <property type="protein sequence ID" value="CAG41298.1"/>
    <property type="molecule type" value="Genomic_DNA"/>
</dbReference>
<dbReference type="RefSeq" id="WP_001096577.1">
    <property type="nucleotide sequence ID" value="NC_002952.2"/>
</dbReference>
<dbReference type="SMR" id="Q6GEK1"/>
<dbReference type="KEGG" id="sar:SAR2317"/>
<dbReference type="HOGENOM" id="CLU_131047_2_1_9"/>
<dbReference type="Proteomes" id="UP000000596">
    <property type="component" value="Chromosome"/>
</dbReference>
<dbReference type="GO" id="GO:0022625">
    <property type="term" value="C:cytosolic large ribosomal subunit"/>
    <property type="evidence" value="ECO:0007669"/>
    <property type="project" value="TreeGrafter"/>
</dbReference>
<dbReference type="GO" id="GO:0003735">
    <property type="term" value="F:structural constituent of ribosome"/>
    <property type="evidence" value="ECO:0007669"/>
    <property type="project" value="InterPro"/>
</dbReference>
<dbReference type="GO" id="GO:0006412">
    <property type="term" value="P:translation"/>
    <property type="evidence" value="ECO:0007669"/>
    <property type="project" value="UniProtKB-UniRule"/>
</dbReference>
<dbReference type="CDD" id="cd01658">
    <property type="entry name" value="Ribosomal_L30"/>
    <property type="match status" value="1"/>
</dbReference>
<dbReference type="FunFam" id="3.30.1390.20:FF:000001">
    <property type="entry name" value="50S ribosomal protein L30"/>
    <property type="match status" value="1"/>
</dbReference>
<dbReference type="Gene3D" id="3.30.1390.20">
    <property type="entry name" value="Ribosomal protein L30, ferredoxin-like fold domain"/>
    <property type="match status" value="1"/>
</dbReference>
<dbReference type="HAMAP" id="MF_01371_B">
    <property type="entry name" value="Ribosomal_uL30_B"/>
    <property type="match status" value="1"/>
</dbReference>
<dbReference type="InterPro" id="IPR036919">
    <property type="entry name" value="Ribo_uL30_ferredoxin-like_sf"/>
</dbReference>
<dbReference type="InterPro" id="IPR005996">
    <property type="entry name" value="Ribosomal_uL30_bac-type"/>
</dbReference>
<dbReference type="InterPro" id="IPR016082">
    <property type="entry name" value="Ribosomal_uL30_ferredoxin-like"/>
</dbReference>
<dbReference type="NCBIfam" id="TIGR01308">
    <property type="entry name" value="rpmD_bact"/>
    <property type="match status" value="1"/>
</dbReference>
<dbReference type="PANTHER" id="PTHR15892:SF2">
    <property type="entry name" value="LARGE RIBOSOMAL SUBUNIT PROTEIN UL30M"/>
    <property type="match status" value="1"/>
</dbReference>
<dbReference type="PANTHER" id="PTHR15892">
    <property type="entry name" value="MITOCHONDRIAL RIBOSOMAL PROTEIN L30"/>
    <property type="match status" value="1"/>
</dbReference>
<dbReference type="Pfam" id="PF00327">
    <property type="entry name" value="Ribosomal_L30"/>
    <property type="match status" value="1"/>
</dbReference>
<dbReference type="PIRSF" id="PIRSF002211">
    <property type="entry name" value="Ribosomal_L30_bac-type"/>
    <property type="match status" value="1"/>
</dbReference>
<dbReference type="SUPFAM" id="SSF55129">
    <property type="entry name" value="Ribosomal protein L30p/L7e"/>
    <property type="match status" value="1"/>
</dbReference>
<organism>
    <name type="scientific">Staphylococcus aureus (strain MRSA252)</name>
    <dbReference type="NCBI Taxonomy" id="282458"/>
    <lineage>
        <taxon>Bacteria</taxon>
        <taxon>Bacillati</taxon>
        <taxon>Bacillota</taxon>
        <taxon>Bacilli</taxon>
        <taxon>Bacillales</taxon>
        <taxon>Staphylococcaceae</taxon>
        <taxon>Staphylococcus</taxon>
    </lineage>
</organism>
<comment type="subunit">
    <text evidence="1">Part of the 50S ribosomal subunit.</text>
</comment>
<comment type="similarity">
    <text evidence="1">Belongs to the universal ribosomal protein uL30 family.</text>
</comment>
<reference key="1">
    <citation type="journal article" date="2004" name="Proc. Natl. Acad. Sci. U.S.A.">
        <title>Complete genomes of two clinical Staphylococcus aureus strains: evidence for the rapid evolution of virulence and drug resistance.</title>
        <authorList>
            <person name="Holden M.T.G."/>
            <person name="Feil E.J."/>
            <person name="Lindsay J.A."/>
            <person name="Peacock S.J."/>
            <person name="Day N.P.J."/>
            <person name="Enright M.C."/>
            <person name="Foster T.J."/>
            <person name="Moore C.E."/>
            <person name="Hurst L."/>
            <person name="Atkin R."/>
            <person name="Barron A."/>
            <person name="Bason N."/>
            <person name="Bentley S.D."/>
            <person name="Chillingworth C."/>
            <person name="Chillingworth T."/>
            <person name="Churcher C."/>
            <person name="Clark L."/>
            <person name="Corton C."/>
            <person name="Cronin A."/>
            <person name="Doggett J."/>
            <person name="Dowd L."/>
            <person name="Feltwell T."/>
            <person name="Hance Z."/>
            <person name="Harris B."/>
            <person name="Hauser H."/>
            <person name="Holroyd S."/>
            <person name="Jagels K."/>
            <person name="James K.D."/>
            <person name="Lennard N."/>
            <person name="Line A."/>
            <person name="Mayes R."/>
            <person name="Moule S."/>
            <person name="Mungall K."/>
            <person name="Ormond D."/>
            <person name="Quail M.A."/>
            <person name="Rabbinowitsch E."/>
            <person name="Rutherford K.M."/>
            <person name="Sanders M."/>
            <person name="Sharp S."/>
            <person name="Simmonds M."/>
            <person name="Stevens K."/>
            <person name="Whitehead S."/>
            <person name="Barrell B.G."/>
            <person name="Spratt B.G."/>
            <person name="Parkhill J."/>
        </authorList>
    </citation>
    <scope>NUCLEOTIDE SEQUENCE [LARGE SCALE GENOMIC DNA]</scope>
    <source>
        <strain>MRSA252</strain>
    </source>
</reference>
<sequence>MAKLQITLTRSVIGRPETQRKTVEALGLKKTNSSVVVEDNPAIRGQINKVKHLVTVEEK</sequence>
<accession>Q6GEK1</accession>
<name>RL30_STAAR</name>
<keyword id="KW-0687">Ribonucleoprotein</keyword>
<keyword id="KW-0689">Ribosomal protein</keyword>
<evidence type="ECO:0000255" key="1">
    <source>
        <dbReference type="HAMAP-Rule" id="MF_01371"/>
    </source>
</evidence>
<evidence type="ECO:0000305" key="2"/>
<gene>
    <name evidence="1" type="primary">rpmD</name>
    <name type="ordered locus">SAR2317</name>
</gene>
<proteinExistence type="inferred from homology"/>
<protein>
    <recommendedName>
        <fullName evidence="1">Large ribosomal subunit protein uL30</fullName>
    </recommendedName>
    <alternativeName>
        <fullName evidence="2">50S ribosomal protein L30</fullName>
    </alternativeName>
</protein>